<accession>Q7W2Y2</accession>
<keyword id="KW-0028">Amino-acid biosynthesis</keyword>
<keyword id="KW-0963">Cytoplasm</keyword>
<keyword id="KW-0368">Histidine biosynthesis</keyword>
<keyword id="KW-0456">Lyase</keyword>
<sequence length="195" mass="21580">MRTAEITRNTNETRIRVAVNLDGTGKQTIDTGVPFLDHMLDQIARHGLIDLDIKADGDLHIDAHHTVEDVGITLGMAIAKAVGSKAGLRRYGHAYVPLDEALSRVVIDFSGRPGLEYHIDFTRARIGDFDVDLTREFFQGLVNHALMTLHIDNLRGFNAHHQCETVFKAFGRALRMALEVDPRMGDAVPSTKGVL</sequence>
<proteinExistence type="inferred from homology"/>
<dbReference type="EC" id="4.2.1.19" evidence="1"/>
<dbReference type="EMBL" id="BX640436">
    <property type="protein sequence ID" value="CAE39548.1"/>
    <property type="molecule type" value="Genomic_DNA"/>
</dbReference>
<dbReference type="RefSeq" id="WP_003815795.1">
    <property type="nucleotide sequence ID" value="NC_002928.3"/>
</dbReference>
<dbReference type="SMR" id="Q7W2Y2"/>
<dbReference type="GeneID" id="93206066"/>
<dbReference type="KEGG" id="bpa:BPP4269"/>
<dbReference type="HOGENOM" id="CLU_044308_2_0_4"/>
<dbReference type="UniPathway" id="UPA00031">
    <property type="reaction ID" value="UER00011"/>
</dbReference>
<dbReference type="Proteomes" id="UP000001421">
    <property type="component" value="Chromosome"/>
</dbReference>
<dbReference type="GO" id="GO:0005737">
    <property type="term" value="C:cytoplasm"/>
    <property type="evidence" value="ECO:0007669"/>
    <property type="project" value="UniProtKB-SubCell"/>
</dbReference>
<dbReference type="GO" id="GO:0004424">
    <property type="term" value="F:imidazoleglycerol-phosphate dehydratase activity"/>
    <property type="evidence" value="ECO:0007669"/>
    <property type="project" value="UniProtKB-UniRule"/>
</dbReference>
<dbReference type="GO" id="GO:0000105">
    <property type="term" value="P:L-histidine biosynthetic process"/>
    <property type="evidence" value="ECO:0007669"/>
    <property type="project" value="UniProtKB-UniRule"/>
</dbReference>
<dbReference type="CDD" id="cd07914">
    <property type="entry name" value="IGPD"/>
    <property type="match status" value="1"/>
</dbReference>
<dbReference type="FunFam" id="3.30.230.40:FF:000002">
    <property type="entry name" value="Imidazoleglycerol-phosphate dehydratase"/>
    <property type="match status" value="1"/>
</dbReference>
<dbReference type="FunFam" id="3.30.230.40:FF:000003">
    <property type="entry name" value="Imidazoleglycerol-phosphate dehydratase HisB"/>
    <property type="match status" value="1"/>
</dbReference>
<dbReference type="Gene3D" id="3.30.230.40">
    <property type="entry name" value="Imidazole glycerol phosphate dehydratase, domain 1"/>
    <property type="match status" value="2"/>
</dbReference>
<dbReference type="HAMAP" id="MF_00076">
    <property type="entry name" value="HisB"/>
    <property type="match status" value="1"/>
</dbReference>
<dbReference type="InterPro" id="IPR038494">
    <property type="entry name" value="IGPD_sf"/>
</dbReference>
<dbReference type="InterPro" id="IPR000807">
    <property type="entry name" value="ImidazoleglycerolP_deHydtase"/>
</dbReference>
<dbReference type="InterPro" id="IPR020565">
    <property type="entry name" value="ImidazoleglycerP_deHydtase_CS"/>
</dbReference>
<dbReference type="InterPro" id="IPR020568">
    <property type="entry name" value="Ribosomal_Su5_D2-typ_SF"/>
</dbReference>
<dbReference type="NCBIfam" id="NF002106">
    <property type="entry name" value="PRK00951.1-1"/>
    <property type="match status" value="1"/>
</dbReference>
<dbReference type="NCBIfam" id="NF002109">
    <property type="entry name" value="PRK00951.1-5"/>
    <property type="match status" value="1"/>
</dbReference>
<dbReference type="NCBIfam" id="NF002111">
    <property type="entry name" value="PRK00951.2-1"/>
    <property type="match status" value="1"/>
</dbReference>
<dbReference type="NCBIfam" id="NF002114">
    <property type="entry name" value="PRK00951.2-4"/>
    <property type="match status" value="1"/>
</dbReference>
<dbReference type="PANTHER" id="PTHR23133:SF2">
    <property type="entry name" value="IMIDAZOLEGLYCEROL-PHOSPHATE DEHYDRATASE"/>
    <property type="match status" value="1"/>
</dbReference>
<dbReference type="PANTHER" id="PTHR23133">
    <property type="entry name" value="IMIDAZOLEGLYCEROL-PHOSPHATE DEHYDRATASE HIS7"/>
    <property type="match status" value="1"/>
</dbReference>
<dbReference type="Pfam" id="PF00475">
    <property type="entry name" value="IGPD"/>
    <property type="match status" value="1"/>
</dbReference>
<dbReference type="SUPFAM" id="SSF54211">
    <property type="entry name" value="Ribosomal protein S5 domain 2-like"/>
    <property type="match status" value="2"/>
</dbReference>
<dbReference type="PROSITE" id="PS00954">
    <property type="entry name" value="IGP_DEHYDRATASE_1"/>
    <property type="match status" value="1"/>
</dbReference>
<dbReference type="PROSITE" id="PS00955">
    <property type="entry name" value="IGP_DEHYDRATASE_2"/>
    <property type="match status" value="1"/>
</dbReference>
<comment type="catalytic activity">
    <reaction evidence="1">
        <text>D-erythro-1-(imidazol-4-yl)glycerol 3-phosphate = 3-(imidazol-4-yl)-2-oxopropyl phosphate + H2O</text>
        <dbReference type="Rhea" id="RHEA:11040"/>
        <dbReference type="ChEBI" id="CHEBI:15377"/>
        <dbReference type="ChEBI" id="CHEBI:57766"/>
        <dbReference type="ChEBI" id="CHEBI:58278"/>
        <dbReference type="EC" id="4.2.1.19"/>
    </reaction>
</comment>
<comment type="pathway">
    <text evidence="1">Amino-acid biosynthesis; L-histidine biosynthesis; L-histidine from 5-phospho-alpha-D-ribose 1-diphosphate: step 6/9.</text>
</comment>
<comment type="subcellular location">
    <subcellularLocation>
        <location evidence="1">Cytoplasm</location>
    </subcellularLocation>
</comment>
<comment type="similarity">
    <text evidence="1">Belongs to the imidazoleglycerol-phosphate dehydratase family.</text>
</comment>
<evidence type="ECO:0000255" key="1">
    <source>
        <dbReference type="HAMAP-Rule" id="MF_00076"/>
    </source>
</evidence>
<reference key="1">
    <citation type="journal article" date="2003" name="Nat. Genet.">
        <title>Comparative analysis of the genome sequences of Bordetella pertussis, Bordetella parapertussis and Bordetella bronchiseptica.</title>
        <authorList>
            <person name="Parkhill J."/>
            <person name="Sebaihia M."/>
            <person name="Preston A."/>
            <person name="Murphy L.D."/>
            <person name="Thomson N.R."/>
            <person name="Harris D.E."/>
            <person name="Holden M.T.G."/>
            <person name="Churcher C.M."/>
            <person name="Bentley S.D."/>
            <person name="Mungall K.L."/>
            <person name="Cerdeno-Tarraga A.-M."/>
            <person name="Temple L."/>
            <person name="James K.D."/>
            <person name="Harris B."/>
            <person name="Quail M.A."/>
            <person name="Achtman M."/>
            <person name="Atkin R."/>
            <person name="Baker S."/>
            <person name="Basham D."/>
            <person name="Bason N."/>
            <person name="Cherevach I."/>
            <person name="Chillingworth T."/>
            <person name="Collins M."/>
            <person name="Cronin A."/>
            <person name="Davis P."/>
            <person name="Doggett J."/>
            <person name="Feltwell T."/>
            <person name="Goble A."/>
            <person name="Hamlin N."/>
            <person name="Hauser H."/>
            <person name="Holroyd S."/>
            <person name="Jagels K."/>
            <person name="Leather S."/>
            <person name="Moule S."/>
            <person name="Norberczak H."/>
            <person name="O'Neil S."/>
            <person name="Ormond D."/>
            <person name="Price C."/>
            <person name="Rabbinowitsch E."/>
            <person name="Rutter S."/>
            <person name="Sanders M."/>
            <person name="Saunders D."/>
            <person name="Seeger K."/>
            <person name="Sharp S."/>
            <person name="Simmonds M."/>
            <person name="Skelton J."/>
            <person name="Squares R."/>
            <person name="Squares S."/>
            <person name="Stevens K."/>
            <person name="Unwin L."/>
            <person name="Whitehead S."/>
            <person name="Barrell B.G."/>
            <person name="Maskell D.J."/>
        </authorList>
    </citation>
    <scope>NUCLEOTIDE SEQUENCE [LARGE SCALE GENOMIC DNA]</scope>
    <source>
        <strain>12822 / ATCC BAA-587 / NCTC 13253</strain>
    </source>
</reference>
<name>HIS7_BORPA</name>
<feature type="chain" id="PRO_0000158113" description="Imidazoleglycerol-phosphate dehydratase">
    <location>
        <begin position="1"/>
        <end position="195"/>
    </location>
</feature>
<organism>
    <name type="scientific">Bordetella parapertussis (strain 12822 / ATCC BAA-587 / NCTC 13253)</name>
    <dbReference type="NCBI Taxonomy" id="257311"/>
    <lineage>
        <taxon>Bacteria</taxon>
        <taxon>Pseudomonadati</taxon>
        <taxon>Pseudomonadota</taxon>
        <taxon>Betaproteobacteria</taxon>
        <taxon>Burkholderiales</taxon>
        <taxon>Alcaligenaceae</taxon>
        <taxon>Bordetella</taxon>
    </lineage>
</organism>
<gene>
    <name evidence="1" type="primary">hisB</name>
    <name type="ordered locus">BPP4269</name>
</gene>
<protein>
    <recommendedName>
        <fullName evidence="1">Imidazoleglycerol-phosphate dehydratase</fullName>
        <shortName evidence="1">IGPD</shortName>
        <ecNumber evidence="1">4.2.1.19</ecNumber>
    </recommendedName>
</protein>